<organism>
    <name type="scientific">Xanthomonas euvesicatoria pv. vesicatoria (strain 85-10)</name>
    <name type="common">Xanthomonas campestris pv. vesicatoria</name>
    <dbReference type="NCBI Taxonomy" id="316273"/>
    <lineage>
        <taxon>Bacteria</taxon>
        <taxon>Pseudomonadati</taxon>
        <taxon>Pseudomonadota</taxon>
        <taxon>Gammaproteobacteria</taxon>
        <taxon>Lysobacterales</taxon>
        <taxon>Lysobacteraceae</taxon>
        <taxon>Xanthomonas</taxon>
    </lineage>
</organism>
<keyword id="KW-0067">ATP-binding</keyword>
<keyword id="KW-0460">Magnesium</keyword>
<keyword id="KW-0464">Manganese</keyword>
<keyword id="KW-0479">Metal-binding</keyword>
<keyword id="KW-0547">Nucleotide-binding</keyword>
<keyword id="KW-0548">Nucleotidyltransferase</keyword>
<keyword id="KW-0808">Transferase</keyword>
<reference key="1">
    <citation type="journal article" date="2005" name="J. Bacteriol.">
        <title>Insights into genome plasticity and pathogenicity of the plant pathogenic Bacterium Xanthomonas campestris pv. vesicatoria revealed by the complete genome sequence.</title>
        <authorList>
            <person name="Thieme F."/>
            <person name="Koebnik R."/>
            <person name="Bekel T."/>
            <person name="Berger C."/>
            <person name="Boch J."/>
            <person name="Buettner D."/>
            <person name="Caldana C."/>
            <person name="Gaigalat L."/>
            <person name="Goesmann A."/>
            <person name="Kay S."/>
            <person name="Kirchner O."/>
            <person name="Lanz C."/>
            <person name="Linke B."/>
            <person name="McHardy A.C."/>
            <person name="Meyer F."/>
            <person name="Mittenhuber G."/>
            <person name="Nies D.H."/>
            <person name="Niesbach-Kloesgen U."/>
            <person name="Patschkowski T."/>
            <person name="Rueckert C."/>
            <person name="Rupp O."/>
            <person name="Schneiker S."/>
            <person name="Schuster S.C."/>
            <person name="Vorhoelter F.J."/>
            <person name="Weber E."/>
            <person name="Puehler A."/>
            <person name="Bonas U."/>
            <person name="Bartels D."/>
            <person name="Kaiser O."/>
        </authorList>
    </citation>
    <scope>NUCLEOTIDE SEQUENCE [LARGE SCALE GENOMIC DNA]</scope>
    <source>
        <strain>85-10</strain>
    </source>
</reference>
<accession>Q3BSE3</accession>
<proteinExistence type="inferred from homology"/>
<dbReference type="EC" id="2.7.7.-" evidence="1"/>
<dbReference type="EC" id="2.7.7.108" evidence="1"/>
<dbReference type="EMBL" id="AM039952">
    <property type="protein sequence ID" value="CAJ24266.1"/>
    <property type="status" value="ALT_INIT"/>
    <property type="molecule type" value="Genomic_DNA"/>
</dbReference>
<dbReference type="RefSeq" id="WP_041855063.1">
    <property type="nucleotide sequence ID" value="NZ_CP017190.1"/>
</dbReference>
<dbReference type="SMR" id="Q3BSE3"/>
<dbReference type="STRING" id="456327.BJD11_09950"/>
<dbReference type="KEGG" id="xcv:XCV2589"/>
<dbReference type="eggNOG" id="COG0397">
    <property type="taxonomic scope" value="Bacteria"/>
</dbReference>
<dbReference type="HOGENOM" id="CLU_010245_4_0_6"/>
<dbReference type="Proteomes" id="UP000007069">
    <property type="component" value="Chromosome"/>
</dbReference>
<dbReference type="GO" id="GO:0070733">
    <property type="term" value="F:AMPylase activity"/>
    <property type="evidence" value="ECO:0007669"/>
    <property type="project" value="RHEA"/>
</dbReference>
<dbReference type="GO" id="GO:0005524">
    <property type="term" value="F:ATP binding"/>
    <property type="evidence" value="ECO:0007669"/>
    <property type="project" value="UniProtKB-UniRule"/>
</dbReference>
<dbReference type="GO" id="GO:0000287">
    <property type="term" value="F:magnesium ion binding"/>
    <property type="evidence" value="ECO:0007669"/>
    <property type="project" value="UniProtKB-UniRule"/>
</dbReference>
<dbReference type="HAMAP" id="MF_00692">
    <property type="entry name" value="YdiU_SelO"/>
    <property type="match status" value="1"/>
</dbReference>
<dbReference type="InterPro" id="IPR003846">
    <property type="entry name" value="SelO"/>
</dbReference>
<dbReference type="NCBIfam" id="NF000658">
    <property type="entry name" value="PRK00029.1"/>
    <property type="match status" value="1"/>
</dbReference>
<dbReference type="PANTHER" id="PTHR32057">
    <property type="entry name" value="PROTEIN ADENYLYLTRANSFERASE SELO, MITOCHONDRIAL"/>
    <property type="match status" value="1"/>
</dbReference>
<dbReference type="PANTHER" id="PTHR32057:SF14">
    <property type="entry name" value="PROTEIN ADENYLYLTRANSFERASE SELO, MITOCHONDRIAL"/>
    <property type="match status" value="1"/>
</dbReference>
<dbReference type="Pfam" id="PF02696">
    <property type="entry name" value="SelO"/>
    <property type="match status" value="1"/>
</dbReference>
<gene>
    <name evidence="1" type="primary">ydiU</name>
    <name evidence="1" type="synonym">selO</name>
    <name type="ordered locus">XCV2589</name>
</gene>
<protein>
    <recommendedName>
        <fullName evidence="1">Protein nucleotidyltransferase YdiU</fullName>
        <ecNumber evidence="1">2.7.7.-</ecNumber>
    </recommendedName>
    <alternativeName>
        <fullName evidence="1">Protein adenylyltransferase YdiU</fullName>
        <ecNumber evidence="1">2.7.7.108</ecNumber>
    </alternativeName>
    <alternativeName>
        <fullName evidence="1">Protein uridylyltransferase YdiU</fullName>
        <ecNumber evidence="1">2.7.7.-</ecNumber>
    </alternativeName>
</protein>
<feature type="chain" id="PRO_0000271880" description="Protein nucleotidyltransferase YdiU">
    <location>
        <begin position="1"/>
        <end position="518"/>
    </location>
</feature>
<feature type="region of interest" description="Disordered" evidence="2">
    <location>
        <begin position="1"/>
        <end position="25"/>
    </location>
</feature>
<feature type="compositionally biased region" description="Basic and acidic residues" evidence="2">
    <location>
        <begin position="1"/>
        <end position="10"/>
    </location>
</feature>
<feature type="active site" description="Proton acceptor" evidence="1">
    <location>
        <position position="270"/>
    </location>
</feature>
<feature type="binding site" evidence="1">
    <location>
        <position position="100"/>
    </location>
    <ligand>
        <name>ATP</name>
        <dbReference type="ChEBI" id="CHEBI:30616"/>
    </ligand>
</feature>
<feature type="binding site" evidence="1">
    <location>
        <position position="102"/>
    </location>
    <ligand>
        <name>ATP</name>
        <dbReference type="ChEBI" id="CHEBI:30616"/>
    </ligand>
</feature>
<feature type="binding site" evidence="1">
    <location>
        <position position="103"/>
    </location>
    <ligand>
        <name>ATP</name>
        <dbReference type="ChEBI" id="CHEBI:30616"/>
    </ligand>
</feature>
<feature type="binding site" evidence="1">
    <location>
        <position position="123"/>
    </location>
    <ligand>
        <name>ATP</name>
        <dbReference type="ChEBI" id="CHEBI:30616"/>
    </ligand>
</feature>
<feature type="binding site" evidence="1">
    <location>
        <position position="135"/>
    </location>
    <ligand>
        <name>ATP</name>
        <dbReference type="ChEBI" id="CHEBI:30616"/>
    </ligand>
</feature>
<feature type="binding site" evidence="1">
    <location>
        <position position="136"/>
    </location>
    <ligand>
        <name>ATP</name>
        <dbReference type="ChEBI" id="CHEBI:30616"/>
    </ligand>
</feature>
<feature type="binding site" evidence="1">
    <location>
        <position position="193"/>
    </location>
    <ligand>
        <name>ATP</name>
        <dbReference type="ChEBI" id="CHEBI:30616"/>
    </ligand>
</feature>
<feature type="binding site" evidence="1">
    <location>
        <position position="200"/>
    </location>
    <ligand>
        <name>ATP</name>
        <dbReference type="ChEBI" id="CHEBI:30616"/>
    </ligand>
</feature>
<feature type="binding site" evidence="1">
    <location>
        <position position="271"/>
    </location>
    <ligand>
        <name>Mg(2+)</name>
        <dbReference type="ChEBI" id="CHEBI:18420"/>
    </ligand>
</feature>
<feature type="binding site" evidence="1">
    <location>
        <position position="280"/>
    </location>
    <ligand>
        <name>ATP</name>
        <dbReference type="ChEBI" id="CHEBI:30616"/>
    </ligand>
</feature>
<feature type="binding site" evidence="1">
    <location>
        <position position="280"/>
    </location>
    <ligand>
        <name>Mg(2+)</name>
        <dbReference type="ChEBI" id="CHEBI:18420"/>
    </ligand>
</feature>
<sequence>MTHLHFDNRLRQQLPGDPEEGARRREVGAAWSSVLPTPVAAPYLIAHSAEMAQVLGLEAAEIASAQFAQVFGGNALYPGMQPWAVNYGGHQFGHWAGQLGDGRAISLGEAIGTDGGRYELQLKGAGPTPYSRGADGRAVLRSSIREFLCSEAMHHLGVPTTRALSLVGTGEAVVRDMFYDGHPQREPGAIVCRVAPSFIRFGNFELPSARGDIALLKQWVDFTIARDFPALAGAGEALYADWFAQVCERTAVMVAHWMRVGFVHGVMNTDNMSILGLTIDYGPYGWVDDYDPDWTPNTTDAQGRRYRFGTQPQVAYWNLGRLAQALAPLFADQALLQYGLDRFRDTYLACDRRDTAAKLGLAECRDEDLQLIDALRALMRESEMDMTLTFRGLIDLSPEHPDPAQLRDAFYDEDKRLVDAPQLQQWLQRYAARLQQDPLSPEERRARMRLANPRYVLRNYLAQQAIDRAEQGDPSGVQELLEVMRRPYDDQHGRDAFAARRPDWARDRAGCSMLSCSS</sequence>
<evidence type="ECO:0000255" key="1">
    <source>
        <dbReference type="HAMAP-Rule" id="MF_00692"/>
    </source>
</evidence>
<evidence type="ECO:0000256" key="2">
    <source>
        <dbReference type="SAM" id="MobiDB-lite"/>
    </source>
</evidence>
<evidence type="ECO:0000305" key="3"/>
<comment type="function">
    <text evidence="1">Nucleotidyltransferase involved in the post-translational modification of proteins. It can catalyze the addition of adenosine monophosphate (AMP) or uridine monophosphate (UMP) to a protein, resulting in modifications known as AMPylation and UMPylation.</text>
</comment>
<comment type="catalytic activity">
    <reaction evidence="1">
        <text>L-seryl-[protein] + ATP = 3-O-(5'-adenylyl)-L-seryl-[protein] + diphosphate</text>
        <dbReference type="Rhea" id="RHEA:58120"/>
        <dbReference type="Rhea" id="RHEA-COMP:9863"/>
        <dbReference type="Rhea" id="RHEA-COMP:15073"/>
        <dbReference type="ChEBI" id="CHEBI:29999"/>
        <dbReference type="ChEBI" id="CHEBI:30616"/>
        <dbReference type="ChEBI" id="CHEBI:33019"/>
        <dbReference type="ChEBI" id="CHEBI:142516"/>
        <dbReference type="EC" id="2.7.7.108"/>
    </reaction>
</comment>
<comment type="catalytic activity">
    <reaction evidence="1">
        <text>L-threonyl-[protein] + ATP = 3-O-(5'-adenylyl)-L-threonyl-[protein] + diphosphate</text>
        <dbReference type="Rhea" id="RHEA:54292"/>
        <dbReference type="Rhea" id="RHEA-COMP:11060"/>
        <dbReference type="Rhea" id="RHEA-COMP:13847"/>
        <dbReference type="ChEBI" id="CHEBI:30013"/>
        <dbReference type="ChEBI" id="CHEBI:30616"/>
        <dbReference type="ChEBI" id="CHEBI:33019"/>
        <dbReference type="ChEBI" id="CHEBI:138113"/>
        <dbReference type="EC" id="2.7.7.108"/>
    </reaction>
</comment>
<comment type="catalytic activity">
    <reaction evidence="1">
        <text>L-tyrosyl-[protein] + ATP = O-(5'-adenylyl)-L-tyrosyl-[protein] + diphosphate</text>
        <dbReference type="Rhea" id="RHEA:54288"/>
        <dbReference type="Rhea" id="RHEA-COMP:10136"/>
        <dbReference type="Rhea" id="RHEA-COMP:13846"/>
        <dbReference type="ChEBI" id="CHEBI:30616"/>
        <dbReference type="ChEBI" id="CHEBI:33019"/>
        <dbReference type="ChEBI" id="CHEBI:46858"/>
        <dbReference type="ChEBI" id="CHEBI:83624"/>
        <dbReference type="EC" id="2.7.7.108"/>
    </reaction>
</comment>
<comment type="catalytic activity">
    <reaction evidence="1">
        <text>L-histidyl-[protein] + UTP = N(tele)-(5'-uridylyl)-L-histidyl-[protein] + diphosphate</text>
        <dbReference type="Rhea" id="RHEA:83891"/>
        <dbReference type="Rhea" id="RHEA-COMP:9745"/>
        <dbReference type="Rhea" id="RHEA-COMP:20239"/>
        <dbReference type="ChEBI" id="CHEBI:29979"/>
        <dbReference type="ChEBI" id="CHEBI:33019"/>
        <dbReference type="ChEBI" id="CHEBI:46398"/>
        <dbReference type="ChEBI" id="CHEBI:233474"/>
    </reaction>
</comment>
<comment type="catalytic activity">
    <reaction evidence="1">
        <text>L-seryl-[protein] + UTP = O-(5'-uridylyl)-L-seryl-[protein] + diphosphate</text>
        <dbReference type="Rhea" id="RHEA:64604"/>
        <dbReference type="Rhea" id="RHEA-COMP:9863"/>
        <dbReference type="Rhea" id="RHEA-COMP:16635"/>
        <dbReference type="ChEBI" id="CHEBI:29999"/>
        <dbReference type="ChEBI" id="CHEBI:33019"/>
        <dbReference type="ChEBI" id="CHEBI:46398"/>
        <dbReference type="ChEBI" id="CHEBI:156051"/>
    </reaction>
</comment>
<comment type="catalytic activity">
    <reaction evidence="1">
        <text>L-tyrosyl-[protein] + UTP = O-(5'-uridylyl)-L-tyrosyl-[protein] + diphosphate</text>
        <dbReference type="Rhea" id="RHEA:83887"/>
        <dbReference type="Rhea" id="RHEA-COMP:10136"/>
        <dbReference type="Rhea" id="RHEA-COMP:20238"/>
        <dbReference type="ChEBI" id="CHEBI:33019"/>
        <dbReference type="ChEBI" id="CHEBI:46398"/>
        <dbReference type="ChEBI" id="CHEBI:46858"/>
        <dbReference type="ChEBI" id="CHEBI:90602"/>
    </reaction>
</comment>
<comment type="cofactor">
    <cofactor evidence="1">
        <name>Mg(2+)</name>
        <dbReference type="ChEBI" id="CHEBI:18420"/>
    </cofactor>
    <cofactor evidence="1">
        <name>Mn(2+)</name>
        <dbReference type="ChEBI" id="CHEBI:29035"/>
    </cofactor>
</comment>
<comment type="similarity">
    <text evidence="1">Belongs to the SELO family.</text>
</comment>
<comment type="sequence caution" evidence="3">
    <conflict type="erroneous initiation">
        <sequence resource="EMBL-CDS" id="CAJ24266"/>
    </conflict>
</comment>
<name>SELO_XANE5</name>